<protein>
    <recommendedName>
        <fullName evidence="1">Orotidine 5'-phosphate decarboxylase</fullName>
        <ecNumber evidence="1">4.1.1.23</ecNumber>
    </recommendedName>
    <alternativeName>
        <fullName evidence="1">OMP decarboxylase</fullName>
        <shortName evidence="1">OMPDCase</shortName>
        <shortName evidence="1">OMPdecase</shortName>
    </alternativeName>
</protein>
<feature type="chain" id="PRO_1000138526" description="Orotidine 5'-phosphate decarboxylase">
    <location>
        <begin position="1"/>
        <end position="245"/>
    </location>
</feature>
<feature type="active site" description="Proton donor" evidence="1">
    <location>
        <position position="73"/>
    </location>
</feature>
<feature type="binding site" evidence="1">
    <location>
        <position position="22"/>
    </location>
    <ligand>
        <name>substrate</name>
    </ligand>
</feature>
<feature type="binding site" evidence="1">
    <location>
        <position position="44"/>
    </location>
    <ligand>
        <name>substrate</name>
    </ligand>
</feature>
<feature type="binding site" evidence="1">
    <location>
        <begin position="71"/>
        <end position="80"/>
    </location>
    <ligand>
        <name>substrate</name>
    </ligand>
</feature>
<feature type="binding site" evidence="1">
    <location>
        <position position="131"/>
    </location>
    <ligand>
        <name>substrate</name>
    </ligand>
</feature>
<feature type="binding site" evidence="1">
    <location>
        <position position="192"/>
    </location>
    <ligand>
        <name>substrate</name>
    </ligand>
</feature>
<feature type="binding site" evidence="1">
    <location>
        <position position="201"/>
    </location>
    <ligand>
        <name>substrate</name>
    </ligand>
</feature>
<feature type="binding site" evidence="1">
    <location>
        <position position="221"/>
    </location>
    <ligand>
        <name>substrate</name>
    </ligand>
</feature>
<feature type="binding site" evidence="1">
    <location>
        <position position="222"/>
    </location>
    <ligand>
        <name>substrate</name>
    </ligand>
</feature>
<sequence>MTLTASSSSRAVTNSPVVVALDYHNRDAALAFVDKIDPRDCRLKVGKEMFTLFGPQFVRELQQRGFDIFLDLKFHDIPNTAAHAVAAAADLGVWMVNVHASGGARMMTAAREALVPFGKDAPLLIAVTVLTSMEASDLADLGVTLSPADYAERLAALTQKCGLDGVVCSAQEAVRFKQVFGQEFKLVTPGIRPQGSEAGDQRRIMTPEQALAAGVDYMVIGRPVTQSVDPAQTLKAINASLQRSA</sequence>
<accession>B7N497</accession>
<evidence type="ECO:0000255" key="1">
    <source>
        <dbReference type="HAMAP-Rule" id="MF_01200"/>
    </source>
</evidence>
<dbReference type="EC" id="4.1.1.23" evidence="1"/>
<dbReference type="EMBL" id="CU928163">
    <property type="protein sequence ID" value="CAR12790.1"/>
    <property type="molecule type" value="Genomic_DNA"/>
</dbReference>
<dbReference type="RefSeq" id="WP_000176265.1">
    <property type="nucleotide sequence ID" value="NC_011751.1"/>
</dbReference>
<dbReference type="RefSeq" id="YP_002412327.1">
    <property type="nucleotide sequence ID" value="NC_011751.1"/>
</dbReference>
<dbReference type="SMR" id="B7N497"/>
<dbReference type="STRING" id="585056.ECUMN_1584"/>
<dbReference type="KEGG" id="eum:ECUMN_1584"/>
<dbReference type="PATRIC" id="fig|585056.7.peg.1778"/>
<dbReference type="HOGENOM" id="CLU_067069_0_0_6"/>
<dbReference type="UniPathway" id="UPA00070">
    <property type="reaction ID" value="UER00120"/>
</dbReference>
<dbReference type="Proteomes" id="UP000007097">
    <property type="component" value="Chromosome"/>
</dbReference>
<dbReference type="GO" id="GO:0005829">
    <property type="term" value="C:cytosol"/>
    <property type="evidence" value="ECO:0007669"/>
    <property type="project" value="TreeGrafter"/>
</dbReference>
<dbReference type="GO" id="GO:0004590">
    <property type="term" value="F:orotidine-5'-phosphate decarboxylase activity"/>
    <property type="evidence" value="ECO:0007669"/>
    <property type="project" value="UniProtKB-UniRule"/>
</dbReference>
<dbReference type="GO" id="GO:0006207">
    <property type="term" value="P:'de novo' pyrimidine nucleobase biosynthetic process"/>
    <property type="evidence" value="ECO:0007669"/>
    <property type="project" value="InterPro"/>
</dbReference>
<dbReference type="GO" id="GO:0044205">
    <property type="term" value="P:'de novo' UMP biosynthetic process"/>
    <property type="evidence" value="ECO:0007669"/>
    <property type="project" value="UniProtKB-UniRule"/>
</dbReference>
<dbReference type="CDD" id="cd04725">
    <property type="entry name" value="OMP_decarboxylase_like"/>
    <property type="match status" value="1"/>
</dbReference>
<dbReference type="FunFam" id="3.20.20.70:FF:000015">
    <property type="entry name" value="Orotidine 5'-phosphate decarboxylase"/>
    <property type="match status" value="1"/>
</dbReference>
<dbReference type="Gene3D" id="3.20.20.70">
    <property type="entry name" value="Aldolase class I"/>
    <property type="match status" value="1"/>
</dbReference>
<dbReference type="HAMAP" id="MF_01200_B">
    <property type="entry name" value="OMPdecase_type1_B"/>
    <property type="match status" value="1"/>
</dbReference>
<dbReference type="InterPro" id="IPR013785">
    <property type="entry name" value="Aldolase_TIM"/>
</dbReference>
<dbReference type="InterPro" id="IPR014732">
    <property type="entry name" value="OMPdecase"/>
</dbReference>
<dbReference type="InterPro" id="IPR018089">
    <property type="entry name" value="OMPdecase_AS"/>
</dbReference>
<dbReference type="InterPro" id="IPR047596">
    <property type="entry name" value="OMPdecase_bac"/>
</dbReference>
<dbReference type="InterPro" id="IPR001754">
    <property type="entry name" value="OMPdeCOase_dom"/>
</dbReference>
<dbReference type="InterPro" id="IPR011060">
    <property type="entry name" value="RibuloseP-bd_barrel"/>
</dbReference>
<dbReference type="NCBIfam" id="NF001273">
    <property type="entry name" value="PRK00230.1"/>
    <property type="match status" value="1"/>
</dbReference>
<dbReference type="NCBIfam" id="TIGR01740">
    <property type="entry name" value="pyrF"/>
    <property type="match status" value="1"/>
</dbReference>
<dbReference type="PANTHER" id="PTHR32119">
    <property type="entry name" value="OROTIDINE 5'-PHOSPHATE DECARBOXYLASE"/>
    <property type="match status" value="1"/>
</dbReference>
<dbReference type="PANTHER" id="PTHR32119:SF2">
    <property type="entry name" value="OROTIDINE 5'-PHOSPHATE DECARBOXYLASE"/>
    <property type="match status" value="1"/>
</dbReference>
<dbReference type="Pfam" id="PF00215">
    <property type="entry name" value="OMPdecase"/>
    <property type="match status" value="1"/>
</dbReference>
<dbReference type="SMART" id="SM00934">
    <property type="entry name" value="OMPdecase"/>
    <property type="match status" value="1"/>
</dbReference>
<dbReference type="SUPFAM" id="SSF51366">
    <property type="entry name" value="Ribulose-phoshate binding barrel"/>
    <property type="match status" value="1"/>
</dbReference>
<dbReference type="PROSITE" id="PS00156">
    <property type="entry name" value="OMPDECASE"/>
    <property type="match status" value="1"/>
</dbReference>
<proteinExistence type="inferred from homology"/>
<comment type="function">
    <text evidence="1">Catalyzes the decarboxylation of orotidine 5'-monophosphate (OMP) to uridine 5'-monophosphate (UMP).</text>
</comment>
<comment type="catalytic activity">
    <reaction evidence="1">
        <text>orotidine 5'-phosphate + H(+) = UMP + CO2</text>
        <dbReference type="Rhea" id="RHEA:11596"/>
        <dbReference type="ChEBI" id="CHEBI:15378"/>
        <dbReference type="ChEBI" id="CHEBI:16526"/>
        <dbReference type="ChEBI" id="CHEBI:57538"/>
        <dbReference type="ChEBI" id="CHEBI:57865"/>
        <dbReference type="EC" id="4.1.1.23"/>
    </reaction>
</comment>
<comment type="pathway">
    <text evidence="1">Pyrimidine metabolism; UMP biosynthesis via de novo pathway; UMP from orotate: step 2/2.</text>
</comment>
<comment type="subunit">
    <text evidence="1">Homodimer.</text>
</comment>
<comment type="similarity">
    <text evidence="1">Belongs to the OMP decarboxylase family. Type 1 subfamily.</text>
</comment>
<name>PYRF_ECOLU</name>
<keyword id="KW-0210">Decarboxylase</keyword>
<keyword id="KW-0456">Lyase</keyword>
<keyword id="KW-0665">Pyrimidine biosynthesis</keyword>
<gene>
    <name evidence="1" type="primary">pyrF</name>
    <name type="ordered locus">ECUMN_1584</name>
</gene>
<reference key="1">
    <citation type="journal article" date="2009" name="PLoS Genet.">
        <title>Organised genome dynamics in the Escherichia coli species results in highly diverse adaptive paths.</title>
        <authorList>
            <person name="Touchon M."/>
            <person name="Hoede C."/>
            <person name="Tenaillon O."/>
            <person name="Barbe V."/>
            <person name="Baeriswyl S."/>
            <person name="Bidet P."/>
            <person name="Bingen E."/>
            <person name="Bonacorsi S."/>
            <person name="Bouchier C."/>
            <person name="Bouvet O."/>
            <person name="Calteau A."/>
            <person name="Chiapello H."/>
            <person name="Clermont O."/>
            <person name="Cruveiller S."/>
            <person name="Danchin A."/>
            <person name="Diard M."/>
            <person name="Dossat C."/>
            <person name="Karoui M.E."/>
            <person name="Frapy E."/>
            <person name="Garry L."/>
            <person name="Ghigo J.M."/>
            <person name="Gilles A.M."/>
            <person name="Johnson J."/>
            <person name="Le Bouguenec C."/>
            <person name="Lescat M."/>
            <person name="Mangenot S."/>
            <person name="Martinez-Jehanne V."/>
            <person name="Matic I."/>
            <person name="Nassif X."/>
            <person name="Oztas S."/>
            <person name="Petit M.A."/>
            <person name="Pichon C."/>
            <person name="Rouy Z."/>
            <person name="Ruf C.S."/>
            <person name="Schneider D."/>
            <person name="Tourret J."/>
            <person name="Vacherie B."/>
            <person name="Vallenet D."/>
            <person name="Medigue C."/>
            <person name="Rocha E.P.C."/>
            <person name="Denamur E."/>
        </authorList>
    </citation>
    <scope>NUCLEOTIDE SEQUENCE [LARGE SCALE GENOMIC DNA]</scope>
    <source>
        <strain>UMN026 / ExPEC</strain>
    </source>
</reference>
<organism>
    <name type="scientific">Escherichia coli O17:K52:H18 (strain UMN026 / ExPEC)</name>
    <dbReference type="NCBI Taxonomy" id="585056"/>
    <lineage>
        <taxon>Bacteria</taxon>
        <taxon>Pseudomonadati</taxon>
        <taxon>Pseudomonadota</taxon>
        <taxon>Gammaproteobacteria</taxon>
        <taxon>Enterobacterales</taxon>
        <taxon>Enterobacteriaceae</taxon>
        <taxon>Escherichia</taxon>
    </lineage>
</organism>